<dbReference type="EMBL" id="AF495886">
    <property type="protein sequence ID" value="AAM12658.1"/>
    <property type="molecule type" value="mRNA"/>
</dbReference>
<dbReference type="RefSeq" id="NP_001082225.1">
    <property type="nucleotide sequence ID" value="NM_001088756.1"/>
</dbReference>
<dbReference type="SMR" id="Q8QG78"/>
<dbReference type="BioGRID" id="99637">
    <property type="interactions" value="5"/>
</dbReference>
<dbReference type="GeneID" id="398304"/>
<dbReference type="KEGG" id="xla:398304"/>
<dbReference type="AGR" id="Xenbase:XB-GENE-864966"/>
<dbReference type="CTD" id="398304"/>
<dbReference type="Xenbase" id="XB-GENE-864966">
    <property type="gene designation" value="ncor1.S"/>
</dbReference>
<dbReference type="OrthoDB" id="10258692at2759"/>
<dbReference type="Proteomes" id="UP000186698">
    <property type="component" value="Chromosome 2S"/>
</dbReference>
<dbReference type="Bgee" id="398304">
    <property type="expression patterns" value="Expressed in egg cell and 19 other cell types or tissues"/>
</dbReference>
<dbReference type="GO" id="GO:0000785">
    <property type="term" value="C:chromatin"/>
    <property type="evidence" value="ECO:0000318"/>
    <property type="project" value="GO_Central"/>
</dbReference>
<dbReference type="GO" id="GO:0005654">
    <property type="term" value="C:nucleoplasm"/>
    <property type="evidence" value="ECO:0007669"/>
    <property type="project" value="UniProtKB-ARBA"/>
</dbReference>
<dbReference type="GO" id="GO:0032991">
    <property type="term" value="C:protein-containing complex"/>
    <property type="evidence" value="ECO:0007669"/>
    <property type="project" value="UniProtKB-ARBA"/>
</dbReference>
<dbReference type="GO" id="GO:0003677">
    <property type="term" value="F:DNA binding"/>
    <property type="evidence" value="ECO:0007669"/>
    <property type="project" value="UniProtKB-KW"/>
</dbReference>
<dbReference type="GO" id="GO:0046966">
    <property type="term" value="F:nuclear thyroid hormone receptor binding"/>
    <property type="evidence" value="ECO:0000318"/>
    <property type="project" value="GO_Central"/>
</dbReference>
<dbReference type="GO" id="GO:0003714">
    <property type="term" value="F:transcription corepressor activity"/>
    <property type="evidence" value="ECO:0000318"/>
    <property type="project" value="GO_Central"/>
</dbReference>
<dbReference type="GO" id="GO:0006325">
    <property type="term" value="P:chromatin organization"/>
    <property type="evidence" value="ECO:0007669"/>
    <property type="project" value="UniProtKB-KW"/>
</dbReference>
<dbReference type="GO" id="GO:0045892">
    <property type="term" value="P:negative regulation of DNA-templated transcription"/>
    <property type="evidence" value="ECO:0000250"/>
    <property type="project" value="UniProtKB"/>
</dbReference>
<dbReference type="GO" id="GO:0000122">
    <property type="term" value="P:negative regulation of transcription by RNA polymerase II"/>
    <property type="evidence" value="ECO:0000318"/>
    <property type="project" value="GO_Central"/>
</dbReference>
<dbReference type="CDD" id="cd00167">
    <property type="entry name" value="SANT"/>
    <property type="match status" value="2"/>
</dbReference>
<dbReference type="FunFam" id="1.10.10.60:FF:000026">
    <property type="entry name" value="Nuclear receptor corepressor 2 isoform 1"/>
    <property type="match status" value="1"/>
</dbReference>
<dbReference type="FunFam" id="1.20.5.430:FF:000001">
    <property type="entry name" value="Nuclear receptor corepressor 2 isoform 1"/>
    <property type="match status" value="1"/>
</dbReference>
<dbReference type="Gene3D" id="1.20.5.430">
    <property type="match status" value="1"/>
</dbReference>
<dbReference type="Gene3D" id="1.20.58.1880">
    <property type="match status" value="1"/>
</dbReference>
<dbReference type="Gene3D" id="1.10.10.60">
    <property type="entry name" value="Homeodomain-like"/>
    <property type="match status" value="1"/>
</dbReference>
<dbReference type="InterPro" id="IPR009057">
    <property type="entry name" value="Homeodomain-like_sf"/>
</dbReference>
<dbReference type="InterPro" id="IPR014756">
    <property type="entry name" value="Ig_E-set"/>
</dbReference>
<dbReference type="InterPro" id="IPR051571">
    <property type="entry name" value="N-CoR_corepressor"/>
</dbReference>
<dbReference type="InterPro" id="IPR031557">
    <property type="entry name" value="N-CoR_GPS2_interact"/>
</dbReference>
<dbReference type="InterPro" id="IPR001005">
    <property type="entry name" value="SANT/Myb"/>
</dbReference>
<dbReference type="InterPro" id="IPR017884">
    <property type="entry name" value="SANT_dom"/>
</dbReference>
<dbReference type="PANTHER" id="PTHR13992">
    <property type="entry name" value="NUCLEAR RECEPTOR CO-REPRESSOR RELATED NCOR"/>
    <property type="match status" value="1"/>
</dbReference>
<dbReference type="PANTHER" id="PTHR13992:SF5">
    <property type="entry name" value="NUCLEAR RECEPTOR COREPRESSOR 1"/>
    <property type="match status" value="1"/>
</dbReference>
<dbReference type="Pfam" id="PF15784">
    <property type="entry name" value="GPS2_interact"/>
    <property type="match status" value="1"/>
</dbReference>
<dbReference type="Pfam" id="PF00249">
    <property type="entry name" value="Myb_DNA-binding"/>
    <property type="match status" value="1"/>
</dbReference>
<dbReference type="SMART" id="SM00717">
    <property type="entry name" value="SANT"/>
    <property type="match status" value="2"/>
</dbReference>
<dbReference type="SUPFAM" id="SSF81296">
    <property type="entry name" value="E set domains"/>
    <property type="match status" value="1"/>
</dbReference>
<dbReference type="SUPFAM" id="SSF46689">
    <property type="entry name" value="Homeodomain-like"/>
    <property type="match status" value="2"/>
</dbReference>
<dbReference type="PROSITE" id="PS51293">
    <property type="entry name" value="SANT"/>
    <property type="match status" value="2"/>
</dbReference>
<gene>
    <name type="primary">ncor1</name>
</gene>
<keyword id="KW-0156">Chromatin regulator</keyword>
<keyword id="KW-0175">Coiled coil</keyword>
<keyword id="KW-0238">DNA-binding</keyword>
<keyword id="KW-0539">Nucleus</keyword>
<keyword id="KW-1185">Reference proteome</keyword>
<keyword id="KW-0677">Repeat</keyword>
<keyword id="KW-0678">Repressor</keyword>
<keyword id="KW-0804">Transcription</keyword>
<keyword id="KW-0805">Transcription regulation</keyword>
<protein>
    <recommendedName>
        <fullName>Nuclear receptor corepressor 1</fullName>
        <shortName>N-CoR</shortName>
        <shortName>N-CoR1</shortName>
        <shortName>xN-CoR</shortName>
    </recommendedName>
</protein>
<accession>Q8QG78</accession>
<name>NCOR1_XENLA</name>
<reference key="1">
    <citation type="journal article" date="2002" name="Mol. Cell. Biol.">
        <title>Nuclear receptor corepressor recruitment by unliganded thyroid hormone receptor in gene repression during Xenopus laevis development.</title>
        <authorList>
            <person name="Sachs L.M."/>
            <person name="Jones P.L."/>
            <person name="Havis E."/>
            <person name="Rouse N."/>
            <person name="Demeneix B.A."/>
            <person name="Shi Y.-B."/>
        </authorList>
    </citation>
    <scope>NUCLEOTIDE SEQUENCE [MRNA]</scope>
    <scope>FUNCTION</scope>
    <scope>INTERACTION WITH RXRA AND THRB</scope>
    <scope>DEVELOPMENTAL STAGE</scope>
    <scope>INDUCTION</scope>
</reference>
<reference key="2">
    <citation type="journal article" date="2001" name="J. Biol. Chem.">
        <title>Multiple N-CoR complexes contain distinct histone deacetylases.</title>
        <authorList>
            <person name="Jones P.L."/>
            <person name="Sachs L.M."/>
            <person name="Rouse N."/>
            <person name="Wade P.A."/>
            <person name="Shi Y.-B."/>
        </authorList>
    </citation>
    <scope>INTERACTION WITH HDAC1; HDAC2; RBBP4; RXRA; SIN3A; SIN3B AND THRB</scope>
</reference>
<reference key="3">
    <citation type="journal article" date="2002" name="Genes Dev.">
        <title>Specific targeting and constitutive association of histone deacetylase complexes during transcriptional repression.</title>
        <authorList>
            <person name="Li J."/>
            <person name="Lin Q."/>
            <person name="Wang W."/>
            <person name="Wade P.A."/>
            <person name="Wong J."/>
        </authorList>
    </citation>
    <scope>PROMOTER BINDING</scope>
</reference>
<reference key="4">
    <citation type="journal article" date="2003" name="EMBO Rep.">
        <title>Metamorphic T3-response genes have specific co-regulator requirements.</title>
        <authorList>
            <person name="Havis E."/>
            <person name="Sachs L.M."/>
            <person name="Demeneix B.A."/>
        </authorList>
    </citation>
    <scope>FUNCTION</scope>
</reference>
<reference key="5">
    <citation type="journal article" date="2003" name="J. Biol. Chem.">
        <title>Fusion protein of retinoic acid receptor-alpha with promyelocytic leukemia protein or promyelocytic leukemia zinc finger protein recruits N-CoR-TBLR1 corepressor complex to repress transcription in vivo.</title>
        <authorList>
            <person name="Tomita A."/>
            <person name="Buchholz D.R."/>
            <person name="Obata K."/>
            <person name="Shi Y.-B."/>
        </authorList>
    </citation>
    <scope>FUNCTION</scope>
    <scope>INTERACTION WITH RARA; RXRA AND TBL1XR1-A</scope>
</reference>
<reference key="6">
    <citation type="journal article" date="2004" name="Mol. Cell. Biol.">
        <title>Recruitment of N-CoR/SMRT-TBLR1 corepressor complex by unliganded thyroid hormone receptor for gene repression during frog development.</title>
        <authorList>
            <person name="Tomita A."/>
            <person name="Buchholz D.R."/>
            <person name="Shi Y.-B."/>
        </authorList>
    </citation>
    <scope>FUNCTION</scope>
    <scope>INTERACTION WITH RXRA; THRB AND TBL1XR1-A</scope>
    <scope>DEVELOPMENTAL STAGE</scope>
</reference>
<reference key="7">
    <citation type="journal article" date="2005" name="Dev. Cell">
        <title>Kaiso/p120-catenin and TCF/beta-catenin complexes coordinately regulate canonical Wnt gene targets.</title>
        <authorList>
            <person name="Park J.-I."/>
            <person name="Kim S.-W."/>
            <person name="Lyons J.P."/>
            <person name="Ji H."/>
            <person name="Nguyen T.T."/>
            <person name="Cho K."/>
            <person name="Barton M.C."/>
            <person name="Deroo T."/>
            <person name="Vleminckx K."/>
            <person name="Moon R.T."/>
            <person name="McCrea P.D."/>
        </authorList>
    </citation>
    <scope>FUNCTION</scope>
    <scope>INTERACTION WITH ZBTB33</scope>
</reference>
<feature type="chain" id="PRO_0000055620" description="Nuclear receptor corepressor 1">
    <location>
        <begin position="1"/>
        <end position="2498"/>
    </location>
</feature>
<feature type="domain" description="SANT 1" evidence="4">
    <location>
        <begin position="427"/>
        <end position="478"/>
    </location>
</feature>
<feature type="domain" description="SANT 2" evidence="4">
    <location>
        <begin position="628"/>
        <end position="665"/>
    </location>
</feature>
<feature type="region of interest" description="Disordered" evidence="5">
    <location>
        <begin position="1"/>
        <end position="38"/>
    </location>
</feature>
<feature type="region of interest" description="Disordered" evidence="5">
    <location>
        <begin position="54"/>
        <end position="84"/>
    </location>
</feature>
<feature type="region of interest" description="Disordered" evidence="5">
    <location>
        <begin position="134"/>
        <end position="169"/>
    </location>
</feature>
<feature type="region of interest" description="Interaction with tbl1xr1-A">
    <location>
        <begin position="154"/>
        <end position="304"/>
    </location>
</feature>
<feature type="region of interest" description="Disordered" evidence="5">
    <location>
        <begin position="198"/>
        <end position="223"/>
    </location>
</feature>
<feature type="region of interest" description="Disordered" evidence="5">
    <location>
        <begin position="483"/>
        <end position="649"/>
    </location>
</feature>
<feature type="region of interest" description="Disordered" evidence="5">
    <location>
        <begin position="668"/>
        <end position="912"/>
    </location>
</feature>
<feature type="region of interest" description="Disordered" evidence="5">
    <location>
        <begin position="1075"/>
        <end position="1122"/>
    </location>
</feature>
<feature type="region of interest" description="Disordered" evidence="5">
    <location>
        <begin position="1417"/>
        <end position="1436"/>
    </location>
</feature>
<feature type="region of interest" description="Disordered" evidence="5">
    <location>
        <begin position="1470"/>
        <end position="1583"/>
    </location>
</feature>
<feature type="region of interest" description="Disordered" evidence="5">
    <location>
        <begin position="1737"/>
        <end position="1851"/>
    </location>
</feature>
<feature type="region of interest" description="Disordered" evidence="5">
    <location>
        <begin position="1916"/>
        <end position="1990"/>
    </location>
</feature>
<feature type="region of interest" description="Disordered" evidence="5">
    <location>
        <begin position="2022"/>
        <end position="2109"/>
    </location>
</feature>
<feature type="region of interest" description="Disordered" evidence="5">
    <location>
        <begin position="2136"/>
        <end position="2222"/>
    </location>
</feature>
<feature type="region of interest" description="Disordered" evidence="5">
    <location>
        <begin position="2344"/>
        <end position="2446"/>
    </location>
</feature>
<feature type="region of interest" description="Disordered" evidence="5">
    <location>
        <begin position="2464"/>
        <end position="2498"/>
    </location>
</feature>
<feature type="coiled-coil region" evidence="3">
    <location>
        <begin position="168"/>
        <end position="208"/>
    </location>
</feature>
<feature type="coiled-coil region" evidence="3">
    <location>
        <begin position="502"/>
        <end position="552"/>
    </location>
</feature>
<feature type="coiled-coil region" evidence="3">
    <location>
        <begin position="1765"/>
        <end position="1804"/>
    </location>
</feature>
<feature type="short sequence motif" description="CORNR box 1">
    <location>
        <begin position="2012"/>
        <end position="2016"/>
    </location>
</feature>
<feature type="short sequence motif" description="CORNR box 2">
    <location>
        <begin position="2123"/>
        <end position="2127"/>
    </location>
</feature>
<feature type="short sequence motif" description="CORNR box 3">
    <location>
        <begin position="2326"/>
        <end position="2330"/>
    </location>
</feature>
<feature type="compositionally biased region" description="Basic and acidic residues" evidence="5">
    <location>
        <begin position="71"/>
        <end position="82"/>
    </location>
</feature>
<feature type="compositionally biased region" description="Basic and acidic residues" evidence="5">
    <location>
        <begin position="134"/>
        <end position="148"/>
    </location>
</feature>
<feature type="compositionally biased region" description="Basic and acidic residues" evidence="5">
    <location>
        <begin position="204"/>
        <end position="213"/>
    </location>
</feature>
<feature type="compositionally biased region" description="Basic residues" evidence="5">
    <location>
        <begin position="483"/>
        <end position="493"/>
    </location>
</feature>
<feature type="compositionally biased region" description="Basic and acidic residues" evidence="5">
    <location>
        <begin position="502"/>
        <end position="525"/>
    </location>
</feature>
<feature type="compositionally biased region" description="Basic and acidic residues" evidence="5">
    <location>
        <begin position="535"/>
        <end position="548"/>
    </location>
</feature>
<feature type="compositionally biased region" description="Low complexity" evidence="5">
    <location>
        <begin position="582"/>
        <end position="611"/>
    </location>
</feature>
<feature type="compositionally biased region" description="Pro residues" evidence="5">
    <location>
        <begin position="612"/>
        <end position="627"/>
    </location>
</feature>
<feature type="compositionally biased region" description="Polar residues" evidence="5">
    <location>
        <begin position="689"/>
        <end position="699"/>
    </location>
</feature>
<feature type="compositionally biased region" description="Acidic residues" evidence="5">
    <location>
        <begin position="700"/>
        <end position="719"/>
    </location>
</feature>
<feature type="compositionally biased region" description="Low complexity" evidence="5">
    <location>
        <begin position="727"/>
        <end position="738"/>
    </location>
</feature>
<feature type="compositionally biased region" description="Low complexity" evidence="5">
    <location>
        <begin position="761"/>
        <end position="774"/>
    </location>
</feature>
<feature type="compositionally biased region" description="Basic and acidic residues" evidence="5">
    <location>
        <begin position="854"/>
        <end position="863"/>
    </location>
</feature>
<feature type="compositionally biased region" description="Polar residues" evidence="5">
    <location>
        <begin position="872"/>
        <end position="891"/>
    </location>
</feature>
<feature type="compositionally biased region" description="Polar residues" evidence="5">
    <location>
        <begin position="1102"/>
        <end position="1122"/>
    </location>
</feature>
<feature type="compositionally biased region" description="Basic and acidic residues" evidence="5">
    <location>
        <begin position="1484"/>
        <end position="1501"/>
    </location>
</feature>
<feature type="compositionally biased region" description="Polar residues" evidence="5">
    <location>
        <begin position="1505"/>
        <end position="1516"/>
    </location>
</feature>
<feature type="compositionally biased region" description="Low complexity" evidence="5">
    <location>
        <begin position="1545"/>
        <end position="1558"/>
    </location>
</feature>
<feature type="compositionally biased region" description="Basic and acidic residues" evidence="5">
    <location>
        <begin position="1767"/>
        <end position="1802"/>
    </location>
</feature>
<feature type="compositionally biased region" description="Low complexity" evidence="5">
    <location>
        <begin position="1803"/>
        <end position="1813"/>
    </location>
</feature>
<feature type="compositionally biased region" description="Low complexity" evidence="5">
    <location>
        <begin position="1820"/>
        <end position="1835"/>
    </location>
</feature>
<feature type="compositionally biased region" description="Polar residues" evidence="5">
    <location>
        <begin position="1842"/>
        <end position="1851"/>
    </location>
</feature>
<feature type="compositionally biased region" description="Basic and acidic residues" evidence="5">
    <location>
        <begin position="1921"/>
        <end position="1942"/>
    </location>
</feature>
<feature type="compositionally biased region" description="Low complexity" evidence="5">
    <location>
        <begin position="1958"/>
        <end position="1980"/>
    </location>
</feature>
<feature type="compositionally biased region" description="Low complexity" evidence="5">
    <location>
        <begin position="2031"/>
        <end position="2040"/>
    </location>
</feature>
<feature type="compositionally biased region" description="Basic and acidic residues" evidence="5">
    <location>
        <begin position="2043"/>
        <end position="2052"/>
    </location>
</feature>
<feature type="compositionally biased region" description="Polar residues" evidence="5">
    <location>
        <begin position="2093"/>
        <end position="2106"/>
    </location>
</feature>
<feature type="compositionally biased region" description="Low complexity" evidence="5">
    <location>
        <begin position="2136"/>
        <end position="2145"/>
    </location>
</feature>
<feature type="compositionally biased region" description="Polar residues" evidence="5">
    <location>
        <begin position="2146"/>
        <end position="2175"/>
    </location>
</feature>
<feature type="compositionally biased region" description="Basic and acidic residues" evidence="5">
    <location>
        <begin position="2190"/>
        <end position="2209"/>
    </location>
</feature>
<feature type="compositionally biased region" description="Polar residues" evidence="5">
    <location>
        <begin position="2353"/>
        <end position="2362"/>
    </location>
</feature>
<feature type="compositionally biased region" description="Basic residues" evidence="5">
    <location>
        <begin position="2380"/>
        <end position="2394"/>
    </location>
</feature>
<feature type="compositionally biased region" description="Polar residues" evidence="5">
    <location>
        <begin position="2464"/>
        <end position="2476"/>
    </location>
</feature>
<feature type="compositionally biased region" description="Polar residues" evidence="5">
    <location>
        <begin position="2489"/>
        <end position="2498"/>
    </location>
</feature>
<organism>
    <name type="scientific">Xenopus laevis</name>
    <name type="common">African clawed frog</name>
    <dbReference type="NCBI Taxonomy" id="8355"/>
    <lineage>
        <taxon>Eukaryota</taxon>
        <taxon>Metazoa</taxon>
        <taxon>Chordata</taxon>
        <taxon>Craniata</taxon>
        <taxon>Vertebrata</taxon>
        <taxon>Euteleostomi</taxon>
        <taxon>Amphibia</taxon>
        <taxon>Batrachia</taxon>
        <taxon>Anura</taxon>
        <taxon>Pipoidea</taxon>
        <taxon>Pipidae</taxon>
        <taxon>Xenopodinae</taxon>
        <taxon>Xenopus</taxon>
        <taxon>Xenopus</taxon>
    </lineage>
</organism>
<sequence length="2498" mass="277828">MSSSGYPPNQGAFSTEQGRYSSHPVQYTFPSSRHQQEYSVSEYRTAHLEASQLIQQQQLRRRPSLLSEFHPVSDRPQDRRSGYDQQYHSISQNEHEALESKRPRLDQVSDSHYRLNPAMVLLVPTIQEGVRVQSEVKKEQGLSSKHESSSSPLSGQPGDDQDASPSKLSKEELIQSMDRVDREIAKVEQQILKLKKKQQQLEEEAAKPPEPEKPVSPPPVEQKHRSVVQIIYDENRKKAEEAHKFLEGLGPKVELPLYNQPSDTKVYHENIKTNQVMRKKLILFFKRRNHARKLREQNICQRYDQLMEAWEKKVDRIENNPRRKAKESKTREYYEKQFPEIRKQREQQERFQRVGQRGTGMSATIARSEHEISEIIDGLSEQENNEKQMRQLSVIPPMMFDAEQRRVKFINTNGLMEDPMKVYKDRQFMNVWTDHEKEIFKEKFVRHPKNFGLIASYLERKNVSDCVLYYYLTKKNENLKSLVRRNYPKRRGRNQQQITRPSQEEKEIEKVEEEKADRNDKKEDERREEEEKEEKEELREGAKDKIDAVAEDGDEKDQSMPRGRKTANNQGRRKGRVTRSMASEAAAANAVTTATTAPVTTTSTATTVAPVPVAPPPEEPTPPPPPQEQSLVDHGRNWGAIAKMVGSKSESQCKNFYFNYKRRHNLDNLLQQHKQKSSRRPREERDVSQCDSIASTVSAQEDDENEASNEEENPEDSEGAENSSDTESAPSPSPAEAARLGDDSVDRTTSSVSMEAPPEQDAASKPASDSSPSPIVENTKPPETQYAELKVKEEISTENEQTMEVEERSQSAELKSALNLQVQTKAEPYETEAKPTESTTQVKTEVDSKEDDSMERLMDRAEAADMGYAPPQNISQARQESQPDNDSSATCSADEEVDGEPDRPRMYSFGSRPSLLNQAGTFLKQGPMDLQQLQHRAAVIPPMTSCSPCNLTTGTAIAASNFSMYQRHLYENSLLEEQRQRQEQLTLENRMSASPGNMSKSPNMDWEGKSVYMPYTEVKHPFEHEAQMQNVARSVSPYRLSPRDVGRVSPQVDMNPSRYCVPPVLQPAPHQVITSLSDSARLPVTRPTRPPPPLIPSSKTSATSSDKPSFITGGSISQGTPGTYLASLSQPYSQETLKPSVGSISLGLPRQHESTKIGCVTYIKQEEFPSRGQSSQPEGLLVRAQHEGVVRGSMAAIQEGSIARGTPATKVPLEAVSTLRGSITQGTPALSQSGIAADVLLKSTITRLAAEDIGSPERCREDTSAKGHVIYEGKSGHIVSYDTIKNMREGTRSPRTAPEVALKRAYDTMEGNIKQAMSVREAAVSGPMEGLICRTLPKGSPHPELKDRQVLSGSIMKGTPRTTSDNFDDGLKYAKQIKLESPPIRSFEGAISKGKPYEGVTTIKELGRSIHEIPRQDLVSQESRKTPESSRQIMEGSISQGTPIKYESTSGQSAIKHNVKSLITGPSNLSWGVPQMDNMPENLKMGERSKHEDTKSSDAIRSRHTSVVSSGPSVLRSTLHEASKSQLSPGIYEDNNARRTPVNYPSPMSRSSPMARSAEGCLTPSKSSSHERKSTLTPTQRESIVVKSPVPGVDPSAAHSPFDTHLRSAPPGDVYRAHLPPHLDPALQFHRPLDPAAAAYLFQRQLSPTPGYPSQYQLYAMENTRQTILNDYITSQQMQVNLRPDVARGLSPRDQGLGIPYPGARGIIDLTNMPPAILVPHPGGTSTPPMDRITYIPGTQLAFPPRPYNPASMSPGHPAHLANSVSAERERERERERERDREREKEQRERESDRERERDRLAHAAAAAAAASAPSEHYLRPVSEQPSRPSSRPSSHGYVRSPSPSVRAQESIMQQRPSIFLGTNGKSVITPLDAAQFRIMPPTPGAASITQGIPASRYSTAADALAALVDAATSAPQMEVAKPKESKNDSARSEENLSRRNALEQQQQIDCERRVMQSPYTSSSFSSSKSQSQPSSAVYSEAGKERTAHTKSRYVEELRMRGKTTITAANFIDVIITQQIASDKDGRERNSQSSDASSSHSSHRYEAPRETIEVISPANSPVQEKESYPQEMPKSSQTETGEGSRKYDGQPNRYRQQQESPPQQTIPGHVPQTHRLITLADHICHIITQDFARNQPVNQPLQQPPASTFQSTNPTSTAVRTKASSRFSPESQVQPMHSPRPASRVSPENIPDKPRGRPGKSPDRGHISEPYEPISPPQAPMLHTKQDNMMLLSQRQEPPEQRNDSRSPGNINYLPSFFTKLENTSPMVMYKKQEIFRKLNSSGGGDSDMAAAQPGTEIFNLPAVTTSGAISSRGHSFADPASNLGLEDIIRKALMGNFDDKSEDHGVLVGVPQGNQSGTPNSEARREEANPSPNSGGGTHKQKLISKYGSRKTKSPISGSQTYLGAERPSSVSSVHSEGDYRQASAWAWEDRPSSTGSTQFPYNPLTMGMLNSTPPSSMSCIPTSMTQTSAHQQSRIWEREPAPLLSEQYETLSDSDE</sequence>
<evidence type="ECO:0000250" key="1"/>
<evidence type="ECO:0000250" key="2">
    <source>
        <dbReference type="UniProtKB" id="Q60974"/>
    </source>
</evidence>
<evidence type="ECO:0000255" key="3"/>
<evidence type="ECO:0000255" key="4">
    <source>
        <dbReference type="PROSITE-ProRule" id="PRU00624"/>
    </source>
</evidence>
<evidence type="ECO:0000256" key="5">
    <source>
        <dbReference type="SAM" id="MobiDB-lite"/>
    </source>
</evidence>
<evidence type="ECO:0000269" key="6">
    <source>
    </source>
</evidence>
<evidence type="ECO:0000269" key="7">
    <source>
    </source>
</evidence>
<evidence type="ECO:0000269" key="8">
    <source>
    </source>
</evidence>
<evidence type="ECO:0000269" key="9">
    <source>
    </source>
</evidence>
<evidence type="ECO:0000269" key="10">
    <source>
    </source>
</evidence>
<evidence type="ECO:0000269" key="11">
    <source>
    </source>
</evidence>
<evidence type="ECO:0000305" key="12"/>
<proteinExistence type="evidence at protein level"/>
<comment type="function">
    <text evidence="2 7 8 9 10 11">Mediates transcriptional repression by certain nuclear receptors. Participates in complexes which promote histone deacetylation and the formation of repressive chromatin structures which may impede access by the basal transcription machinery. In association with hdac3, may play a role in the regulation of the circadian clock (By similarity).</text>
</comment>
<comment type="subunit">
    <text evidence="6 7 8 10 11">Forms a large corepressor complex that contains sin3a/b, histone deacetylases hdac1 and hdac2, rbbp4 and possibly rbbp7. Interacts with the thyroid receptor (TR, composed of rxra and thrb) and the retinoid acid receptor (RAR, composed of rxra and rara) in the absence of ligand. Interacts with tbl1xr1-A and possibly tbl1xr1-B. Interacts with zbtb33/kaiso.</text>
</comment>
<comment type="subcellular location">
    <subcellularLocation>
        <location evidence="4">Nucleus</location>
    </subcellularLocation>
</comment>
<comment type="developmental stage">
    <text evidence="7 10">Expressed in the developing intestine both prior to and during remodeling (stages NF54 to NF66). Also expressed at high levels in the tail during tail regression (stages NF62 and NF64) and in the hindlimbs during hindlimb morphogenesis (stage NF56).</text>
</comment>
<comment type="induction">
    <text evidence="7">By thyroid hormone in the developing intestine and tail.</text>
</comment>
<comment type="domain">
    <text evidence="1">The CORNR box motifs in the C-terminal region may be necessary and sufficient for binding to unligated nuclear hormone receptors. Sequences flanking these motifs may determine the precise nuclear hormone receptor specificity (By similarity).</text>
</comment>
<comment type="similarity">
    <text evidence="12">Belongs to the N-CoR nuclear receptor corepressors family.</text>
</comment>